<feature type="chain" id="PRO_1000188821" description="L-ribulose-5-phosphate 3-epimerase UlaE">
    <location>
        <begin position="1"/>
        <end position="284"/>
    </location>
</feature>
<organism>
    <name type="scientific">Escherichia coli O45:K1 (strain S88 / ExPEC)</name>
    <dbReference type="NCBI Taxonomy" id="585035"/>
    <lineage>
        <taxon>Bacteria</taxon>
        <taxon>Pseudomonadati</taxon>
        <taxon>Pseudomonadota</taxon>
        <taxon>Gammaproteobacteria</taxon>
        <taxon>Enterobacterales</taxon>
        <taxon>Enterobacteriaceae</taxon>
        <taxon>Escherichia</taxon>
    </lineage>
</organism>
<reference key="1">
    <citation type="journal article" date="2009" name="PLoS Genet.">
        <title>Organised genome dynamics in the Escherichia coli species results in highly diverse adaptive paths.</title>
        <authorList>
            <person name="Touchon M."/>
            <person name="Hoede C."/>
            <person name="Tenaillon O."/>
            <person name="Barbe V."/>
            <person name="Baeriswyl S."/>
            <person name="Bidet P."/>
            <person name="Bingen E."/>
            <person name="Bonacorsi S."/>
            <person name="Bouchier C."/>
            <person name="Bouvet O."/>
            <person name="Calteau A."/>
            <person name="Chiapello H."/>
            <person name="Clermont O."/>
            <person name="Cruveiller S."/>
            <person name="Danchin A."/>
            <person name="Diard M."/>
            <person name="Dossat C."/>
            <person name="Karoui M.E."/>
            <person name="Frapy E."/>
            <person name="Garry L."/>
            <person name="Ghigo J.M."/>
            <person name="Gilles A.M."/>
            <person name="Johnson J."/>
            <person name="Le Bouguenec C."/>
            <person name="Lescat M."/>
            <person name="Mangenot S."/>
            <person name="Martinez-Jehanne V."/>
            <person name="Matic I."/>
            <person name="Nassif X."/>
            <person name="Oztas S."/>
            <person name="Petit M.A."/>
            <person name="Pichon C."/>
            <person name="Rouy Z."/>
            <person name="Ruf C.S."/>
            <person name="Schneider D."/>
            <person name="Tourret J."/>
            <person name="Vacherie B."/>
            <person name="Vallenet D."/>
            <person name="Medigue C."/>
            <person name="Rocha E.P.C."/>
            <person name="Denamur E."/>
        </authorList>
    </citation>
    <scope>NUCLEOTIDE SEQUENCE [LARGE SCALE GENOMIC DNA]</scope>
    <source>
        <strain>S88 / ExPEC</strain>
    </source>
</reference>
<sequence length="284" mass="32069">MLSKQIPLGIYEKALPAGECWLERLQLAKTLGFDFVEMSVDETDDRLSRLDWSREQRLALVNAIVETGVRVPSMCLSAHRRFPLGSEDDAVRAQGLEIMRKAIQFAQDVGIRVIQLAGYDVYYQEANNETRRRFRDGLKESVEMASRAQVTLAMEIMDYPLMNSISKALGYAHYFNNPWFQLYPDIGNLSAWDNDVQMELQAGIGHIVAVHVKDTKPGVFKNVPFGEGVVDFERCFETLKQSGYCGPYLIEMWSETAEDPAAEVAKARDWVKARMAKAGMVEAA</sequence>
<gene>
    <name evidence="1" type="primary">ulaE</name>
    <name type="ordered locus">ECS88_4783</name>
</gene>
<protein>
    <recommendedName>
        <fullName evidence="1">L-ribulose-5-phosphate 3-epimerase UlaE</fullName>
        <ecNumber evidence="1">5.1.3.22</ecNumber>
    </recommendedName>
    <alternativeName>
        <fullName evidence="1">L-ascorbate utilization protein E</fullName>
    </alternativeName>
    <alternativeName>
        <fullName evidence="1">L-xylulose-5-phosphate 3-epimerase</fullName>
    </alternativeName>
</protein>
<evidence type="ECO:0000255" key="1">
    <source>
        <dbReference type="HAMAP-Rule" id="MF_01951"/>
    </source>
</evidence>
<keyword id="KW-0413">Isomerase</keyword>
<keyword id="KW-1185">Reference proteome</keyword>
<proteinExistence type="inferred from homology"/>
<dbReference type="EC" id="5.1.3.22" evidence="1"/>
<dbReference type="EMBL" id="CU928161">
    <property type="protein sequence ID" value="CAR05932.1"/>
    <property type="molecule type" value="Genomic_DNA"/>
</dbReference>
<dbReference type="RefSeq" id="WP_000949496.1">
    <property type="nucleotide sequence ID" value="NC_011742.1"/>
</dbReference>
<dbReference type="SMR" id="B7MLK2"/>
<dbReference type="KEGG" id="ecz:ECS88_4783"/>
<dbReference type="HOGENOM" id="CLU_082738_0_0_6"/>
<dbReference type="UniPathway" id="UPA00263">
    <property type="reaction ID" value="UER00379"/>
</dbReference>
<dbReference type="Proteomes" id="UP000000747">
    <property type="component" value="Chromosome"/>
</dbReference>
<dbReference type="GO" id="GO:0016861">
    <property type="term" value="F:intramolecular oxidoreductase activity, interconverting aldoses and ketoses"/>
    <property type="evidence" value="ECO:0007669"/>
    <property type="project" value="InterPro"/>
</dbReference>
<dbReference type="GO" id="GO:0034015">
    <property type="term" value="F:L-ribulose-5-phosphate 3-epimerase activity"/>
    <property type="evidence" value="ECO:0007669"/>
    <property type="project" value="UniProtKB-UniRule"/>
</dbReference>
<dbReference type="GO" id="GO:0019854">
    <property type="term" value="P:L-ascorbic acid catabolic process"/>
    <property type="evidence" value="ECO:0007669"/>
    <property type="project" value="UniProtKB-UniRule"/>
</dbReference>
<dbReference type="FunFam" id="3.20.20.150:FF:000003">
    <property type="entry name" value="L-ribulose-5-phosphate 3-epimerase UlaE"/>
    <property type="match status" value="1"/>
</dbReference>
<dbReference type="Gene3D" id="3.20.20.150">
    <property type="entry name" value="Divalent-metal-dependent TIM barrel enzymes"/>
    <property type="match status" value="1"/>
</dbReference>
<dbReference type="HAMAP" id="MF_01951">
    <property type="entry name" value="UlaE"/>
    <property type="match status" value="1"/>
</dbReference>
<dbReference type="InterPro" id="IPR004560">
    <property type="entry name" value="L-Ru-5P_3-Epase"/>
</dbReference>
<dbReference type="InterPro" id="IPR023492">
    <property type="entry name" value="L-Ru-5P_3-Epase_Enterobacteria"/>
</dbReference>
<dbReference type="InterPro" id="IPR050417">
    <property type="entry name" value="Sugar_Epim/Isomerase"/>
</dbReference>
<dbReference type="InterPro" id="IPR036237">
    <property type="entry name" value="Xyl_isomerase-like_sf"/>
</dbReference>
<dbReference type="InterPro" id="IPR013022">
    <property type="entry name" value="Xyl_isomerase-like_TIM-brl"/>
</dbReference>
<dbReference type="NCBIfam" id="TIGR00542">
    <property type="entry name" value="hxl6Piso_put"/>
    <property type="match status" value="1"/>
</dbReference>
<dbReference type="NCBIfam" id="NF009688">
    <property type="entry name" value="PRK13209.1"/>
    <property type="match status" value="1"/>
</dbReference>
<dbReference type="NCBIfam" id="NF009689">
    <property type="entry name" value="PRK13210.1"/>
    <property type="match status" value="1"/>
</dbReference>
<dbReference type="PANTHER" id="PTHR43489">
    <property type="entry name" value="ISOMERASE"/>
    <property type="match status" value="1"/>
</dbReference>
<dbReference type="PANTHER" id="PTHR43489:SF8">
    <property type="entry name" value="L-RIBULOSE-5-PHOSPHATE 3-EPIMERASE ULAE"/>
    <property type="match status" value="1"/>
</dbReference>
<dbReference type="Pfam" id="PF01261">
    <property type="entry name" value="AP_endonuc_2"/>
    <property type="match status" value="1"/>
</dbReference>
<dbReference type="SUPFAM" id="SSF51658">
    <property type="entry name" value="Xylose isomerase-like"/>
    <property type="match status" value="1"/>
</dbReference>
<name>ULAE_ECO45</name>
<accession>B7MLK2</accession>
<comment type="function">
    <text evidence="1">Catalyzes the isomerization of L-xylulose-5-phosphate to L-ribulose-5-phosphate. Is involved in the anaerobic L-ascorbate utilization.</text>
</comment>
<comment type="catalytic activity">
    <reaction evidence="1">
        <text>L-ribulose 5-phosphate = L-xylulose 5-phosphate</text>
        <dbReference type="Rhea" id="RHEA:18497"/>
        <dbReference type="ChEBI" id="CHEBI:57829"/>
        <dbReference type="ChEBI" id="CHEBI:58226"/>
        <dbReference type="EC" id="5.1.3.22"/>
    </reaction>
</comment>
<comment type="pathway">
    <text evidence="1">Cofactor degradation; L-ascorbate degradation; D-xylulose 5-phosphate from L-ascorbate: step 3/4.</text>
</comment>
<comment type="induction">
    <text evidence="1">Induced by L-ascorbate. Repressed by UlaR.</text>
</comment>
<comment type="similarity">
    <text evidence="1">Belongs to the L-ribulose-5-phosphate 3-epimerase family.</text>
</comment>